<protein>
    <recommendedName>
        <fullName evidence="6">Alkene monooxygenase system, ferredoxin component</fullName>
    </recommendedName>
    <alternativeName>
        <fullName evidence="6">Alkene monooxygenase 13.3 kDa subunit</fullName>
    </alternativeName>
</protein>
<organism>
    <name type="scientific">Xanthobacter autotrophicus (strain ATCC BAA-1158 / Py2)</name>
    <dbReference type="NCBI Taxonomy" id="78245"/>
    <lineage>
        <taxon>Bacteria</taxon>
        <taxon>Pseudomonadati</taxon>
        <taxon>Pseudomonadota</taxon>
        <taxon>Alphaproteobacteria</taxon>
        <taxon>Hyphomicrobiales</taxon>
        <taxon>Xanthobacteraceae</taxon>
        <taxon>Xanthobacter</taxon>
    </lineage>
</organism>
<feature type="chain" id="PRO_0000442695" description="Alkene monooxygenase system, ferredoxin component">
    <location>
        <begin position="1"/>
        <end position="122"/>
    </location>
</feature>
<feature type="domain" description="Rieske" evidence="1">
    <location>
        <begin position="16"/>
        <end position="111"/>
    </location>
</feature>
<feature type="binding site" evidence="1">
    <location>
        <position position="55"/>
    </location>
    <ligand>
        <name>[2Fe-2S] cluster</name>
        <dbReference type="ChEBI" id="CHEBI:190135"/>
    </ligand>
</feature>
<feature type="binding site" evidence="1">
    <location>
        <position position="57"/>
    </location>
    <ligand>
        <name>[2Fe-2S] cluster</name>
        <dbReference type="ChEBI" id="CHEBI:190135"/>
    </ligand>
</feature>
<feature type="binding site" evidence="1">
    <location>
        <position position="75"/>
    </location>
    <ligand>
        <name>[2Fe-2S] cluster</name>
        <dbReference type="ChEBI" id="CHEBI:190135"/>
    </ligand>
</feature>
<feature type="binding site" evidence="1">
    <location>
        <position position="78"/>
    </location>
    <ligand>
        <name>[2Fe-2S] cluster</name>
        <dbReference type="ChEBI" id="CHEBI:190135"/>
    </ligand>
</feature>
<geneLocation type="plasmid" evidence="9 11">
    <name>pXAUT01</name>
</geneLocation>
<proteinExistence type="evidence at protein level"/>
<sequence>MNLHAPNAEQDDIEYVDVCAVDDLWDGEMDVFDVGEHEVLLVKHEGRFHAYDGICPHQSVSLVEGHLTEDGVLICKAHEWQFSVEGGQGINPANVCLQSFPLKVEGGRVLIGTEPLPKEGEA</sequence>
<gene>
    <name evidence="5 10" type="primary">xamoC</name>
    <name evidence="5" type="synonym">aamC</name>
    <name evidence="9" type="ordered locus">Xaut_4859</name>
</gene>
<keyword id="KW-0001">2Fe-2S</keyword>
<keyword id="KW-0963">Cytoplasm</keyword>
<keyword id="KW-0249">Electron transport</keyword>
<keyword id="KW-0408">Iron</keyword>
<keyword id="KW-0411">Iron-sulfur</keyword>
<keyword id="KW-0479">Metal-binding</keyword>
<keyword id="KW-0614">Plasmid</keyword>
<keyword id="KW-1185">Reference proteome</keyword>
<keyword id="KW-0813">Transport</keyword>
<dbReference type="EMBL" id="AJ012090">
    <property type="protein sequence ID" value="CAA09913.1"/>
    <property type="molecule type" value="Genomic_DNA"/>
</dbReference>
<dbReference type="EMBL" id="CP000782">
    <property type="protein sequence ID" value="ABS70070.1"/>
    <property type="molecule type" value="Genomic_DNA"/>
</dbReference>
<dbReference type="SMR" id="Q9ZET5"/>
<dbReference type="KEGG" id="xau:Xaut_4859"/>
<dbReference type="eggNOG" id="COG2146">
    <property type="taxonomic scope" value="Bacteria"/>
</dbReference>
<dbReference type="HOGENOM" id="CLU_055690_5_0_5"/>
<dbReference type="PhylomeDB" id="Q9ZET5"/>
<dbReference type="BioCyc" id="MetaCyc:MONOMER-13287"/>
<dbReference type="Proteomes" id="UP000002417">
    <property type="component" value="Plasmid pXAUT01"/>
</dbReference>
<dbReference type="GO" id="GO:0005737">
    <property type="term" value="C:cytoplasm"/>
    <property type="evidence" value="ECO:0007669"/>
    <property type="project" value="UniProtKB-SubCell"/>
</dbReference>
<dbReference type="GO" id="GO:0051537">
    <property type="term" value="F:2 iron, 2 sulfur cluster binding"/>
    <property type="evidence" value="ECO:0007669"/>
    <property type="project" value="UniProtKB-KW"/>
</dbReference>
<dbReference type="GO" id="GO:0046872">
    <property type="term" value="F:metal ion binding"/>
    <property type="evidence" value="ECO:0007669"/>
    <property type="project" value="UniProtKB-KW"/>
</dbReference>
<dbReference type="CDD" id="cd03474">
    <property type="entry name" value="Rieske_T4moC"/>
    <property type="match status" value="1"/>
</dbReference>
<dbReference type="Gene3D" id="2.102.10.10">
    <property type="entry name" value="Rieske [2Fe-2S] iron-sulphur domain"/>
    <property type="match status" value="1"/>
</dbReference>
<dbReference type="InterPro" id="IPR017941">
    <property type="entry name" value="Rieske_2Fe-2S"/>
</dbReference>
<dbReference type="InterPro" id="IPR036922">
    <property type="entry name" value="Rieske_2Fe-2S_sf"/>
</dbReference>
<dbReference type="PANTHER" id="PTHR21496">
    <property type="entry name" value="FERREDOXIN-RELATED"/>
    <property type="match status" value="1"/>
</dbReference>
<dbReference type="PANTHER" id="PTHR21496:SF0">
    <property type="entry name" value="RIESKE DOMAIN-CONTAINING PROTEIN"/>
    <property type="match status" value="1"/>
</dbReference>
<dbReference type="Pfam" id="PF00355">
    <property type="entry name" value="Rieske"/>
    <property type="match status" value="1"/>
</dbReference>
<dbReference type="SUPFAM" id="SSF50022">
    <property type="entry name" value="ISP domain"/>
    <property type="match status" value="1"/>
</dbReference>
<dbReference type="PROSITE" id="PS51296">
    <property type="entry name" value="RIESKE"/>
    <property type="match status" value="1"/>
</dbReference>
<name>XAMOC_XANP2</name>
<accession>Q9ZET5</accession>
<reference key="1">
    <citation type="journal article" date="1999" name="Appl. Environ. Microbiol.">
        <title>The alkene monooxygenase from Xanthobacter strain Py2 is closely related to aromatic monooxygenases and catalyzes aromatic monohydroxylation of benzene, toluene, and phenol.</title>
        <authorList>
            <person name="Zhou N.Y."/>
            <person name="Jenkins A."/>
            <person name="Chan Kwo Chion C.K."/>
            <person name="Leak D.J."/>
        </authorList>
    </citation>
    <scope>NUCLEOTIDE SEQUENCE [GENOMIC DNA]</scope>
    <scope>FUNCTION</scope>
    <source>
        <strain evidence="10">ATCC BAA-1158 / Py2</strain>
    </source>
</reference>
<reference key="2">
    <citation type="submission" date="2007-07" db="EMBL/GenBank/DDBJ databases">
        <title>Complete sequence of plasmid pXAUT01 of Xanthobacter autotrophicus Py2.</title>
        <authorList>
            <consortium name="US DOE Joint Genome Institute"/>
            <person name="Copeland A."/>
            <person name="Lucas S."/>
            <person name="Lapidus A."/>
            <person name="Barry K."/>
            <person name="Glavina del Rio T."/>
            <person name="Hammon N."/>
            <person name="Israni S."/>
            <person name="Dalin E."/>
            <person name="Tice H."/>
            <person name="Pitluck S."/>
            <person name="Sims D."/>
            <person name="Brettin T."/>
            <person name="Bruce D."/>
            <person name="Detter J.C."/>
            <person name="Han C."/>
            <person name="Tapia R."/>
            <person name="Brainard J."/>
            <person name="Schmutz J."/>
            <person name="Larimer F."/>
            <person name="Land M."/>
            <person name="Hauser L."/>
            <person name="Kyrpides N."/>
            <person name="Kim E."/>
            <person name="Ensigns S.A."/>
            <person name="Richardson P."/>
        </authorList>
    </citation>
    <scope>NUCLEOTIDE SEQUENCE [LARGE SCALE GENOMIC DNA]</scope>
    <source>
        <strain evidence="11">ATCC BAA-1158 / Py2</strain>
        <plasmid evidence="9">pXAUT01</plasmid>
    </source>
</reference>
<reference key="3">
    <citation type="journal article" date="1996" name="Appl. Environ. Microbiol.">
        <title>Aliphatic and chlorinated alkenes and epoxides as inducers of alkene monooxygenase and epoxidase activities in Xanthobacter strain Py2.</title>
        <authorList>
            <person name="Ensign S.A."/>
        </authorList>
    </citation>
    <scope>INDUCTION</scope>
    <source>
        <strain>ATCC BAA-1158 / Py2</strain>
    </source>
</reference>
<reference key="4">
    <citation type="journal article" date="1997" name="J. Biol. Chem.">
        <title>Alkene monooxygenase from Xanthobacter strain Py2. Purification and characterization of a four-component system central to the bacterial metabolism of aliphatic alkenes.</title>
        <authorList>
            <person name="Small F.J."/>
            <person name="Ensign S.A."/>
        </authorList>
    </citation>
    <scope>FUNCTION</scope>
    <scope>COFACTOR</scope>
    <scope>SUBCELLULAR LOCATION</scope>
    <scope>SUBUNIT</scope>
    <source>
        <strain>ATCC BAA-1158 / Py2</strain>
    </source>
</reference>
<comment type="function">
    <text evidence="2 4">Ferredoxin component of the alkene monooxygenase multicomponent enzyme system which catalyzes the O2- and NADH-dependent epoxidation of short chain (C2 to C6) alkenes to their corresponding epoxides (PubMed:10103255, PubMed:9312093). Functions as an intermediate electron transfer protein (PubMed:9312093).</text>
</comment>
<comment type="cofactor">
    <cofactor evidence="4">
        <name>[2Fe-2S] cluster</name>
        <dbReference type="ChEBI" id="CHEBI:190135"/>
    </cofactor>
    <text evidence="1">Binds 1 [2Fe-2S] cluster per subunit.</text>
</comment>
<comment type="subunit">
    <text evidence="4">Homodimer. The alkene monooxygenase multicomponent enzyme system is composed of an electron transfer component and a monooxygenase component interacting with the effector protein XamoD. The electron transfer component is composed of a ferredoxin reductase (XamoF) and a ferredoxin (XamoC), and the monooxygenase component is formed by a heterohexamer (dimer of heterotrimers) of two alpha subunits (XamoA), two beta subunits (XamoE) and two gamma subunits (XamoB).</text>
</comment>
<comment type="subcellular location">
    <subcellularLocation>
        <location evidence="8">Cytoplasm</location>
    </subcellularLocation>
</comment>
<comment type="induction">
    <text evidence="3">Induced during growth on aliphatic alkenes (such as propylene, ethylene and 1-butylene), epoxides (such as propylene oxide and 1,2-epoxybutane) and chlorinated alkenes and epoxides (such as vinyl chloride, cis- and trans-1,2-dichloroethylene, 1-chloropropylene, 1,3-dichloropropylene, epichlorohydrin, and epifluorohydrin). Repressed during growth on other carbon sources.</text>
</comment>
<comment type="similarity">
    <text evidence="7">Belongs to the bacterial ring-hydroxylating dioxygenase ferredoxin component family.</text>
</comment>
<evidence type="ECO:0000255" key="1">
    <source>
        <dbReference type="PROSITE-ProRule" id="PRU00628"/>
    </source>
</evidence>
<evidence type="ECO:0000269" key="2">
    <source>
    </source>
</evidence>
<evidence type="ECO:0000269" key="3">
    <source>
    </source>
</evidence>
<evidence type="ECO:0000269" key="4">
    <source>
    </source>
</evidence>
<evidence type="ECO:0000303" key="5">
    <source>
    </source>
</evidence>
<evidence type="ECO:0000303" key="6">
    <source>
    </source>
</evidence>
<evidence type="ECO:0000305" key="7"/>
<evidence type="ECO:0000305" key="8">
    <source>
    </source>
</evidence>
<evidence type="ECO:0000312" key="9">
    <source>
        <dbReference type="EMBL" id="ABS70070.1"/>
    </source>
</evidence>
<evidence type="ECO:0000312" key="10">
    <source>
        <dbReference type="EMBL" id="CAA09913.1"/>
    </source>
</evidence>
<evidence type="ECO:0000312" key="11">
    <source>
        <dbReference type="Proteomes" id="UP000002417"/>
    </source>
</evidence>